<protein>
    <recommendedName>
        <fullName evidence="1">Regulator of ribonuclease activity A</fullName>
    </recommendedName>
</protein>
<proteinExistence type="inferred from homology"/>
<comment type="function">
    <text evidence="1">Globally modulates RNA abundance by binding to RNase E (Rne) and regulating its endonucleolytic activity. Can modulate Rne action in a substrate-dependent manner by altering the composition of the degradosome. Modulates RNA-binding and helicase activities of the degradosome.</text>
</comment>
<comment type="subunit">
    <text evidence="1">Homotrimer. Binds to both RNA-binding sites in the C-terminal region of Rne and to RhlB.</text>
</comment>
<comment type="subcellular location">
    <subcellularLocation>
        <location evidence="1">Cytoplasm</location>
    </subcellularLocation>
</comment>
<comment type="similarity">
    <text evidence="1">Belongs to the RraA family.</text>
</comment>
<keyword id="KW-0963">Cytoplasm</keyword>
<keyword id="KW-1185">Reference proteome</keyword>
<dbReference type="EMBL" id="AE005174">
    <property type="protein sequence ID" value="AAG59124.1"/>
    <property type="molecule type" value="Genomic_DNA"/>
</dbReference>
<dbReference type="EMBL" id="BA000007">
    <property type="protein sequence ID" value="BAB38279.1"/>
    <property type="molecule type" value="Genomic_DNA"/>
</dbReference>
<dbReference type="PIR" id="H86082">
    <property type="entry name" value="H86082"/>
</dbReference>
<dbReference type="PIR" id="H91235">
    <property type="entry name" value="H91235"/>
</dbReference>
<dbReference type="RefSeq" id="NP_312883.1">
    <property type="nucleotide sequence ID" value="NC_002695.1"/>
</dbReference>
<dbReference type="RefSeq" id="WP_000872908.1">
    <property type="nucleotide sequence ID" value="NZ_VOAI01000016.1"/>
</dbReference>
<dbReference type="SMR" id="P0A8R2"/>
<dbReference type="STRING" id="155864.Z5476"/>
<dbReference type="GeneID" id="915029"/>
<dbReference type="GeneID" id="93777969"/>
<dbReference type="KEGG" id="ece:Z5476"/>
<dbReference type="KEGG" id="ecs:ECs_4856"/>
<dbReference type="PATRIC" id="fig|386585.9.peg.5078"/>
<dbReference type="eggNOG" id="COG0684">
    <property type="taxonomic scope" value="Bacteria"/>
</dbReference>
<dbReference type="HOGENOM" id="CLU_072626_4_0_6"/>
<dbReference type="OMA" id="RSCDTQF"/>
<dbReference type="Proteomes" id="UP000000558">
    <property type="component" value="Chromosome"/>
</dbReference>
<dbReference type="Proteomes" id="UP000002519">
    <property type="component" value="Chromosome"/>
</dbReference>
<dbReference type="GO" id="GO:0005829">
    <property type="term" value="C:cytosol"/>
    <property type="evidence" value="ECO:0007669"/>
    <property type="project" value="TreeGrafter"/>
</dbReference>
<dbReference type="GO" id="GO:0060698">
    <property type="term" value="F:endoribonuclease inhibitor activity"/>
    <property type="evidence" value="ECO:0007669"/>
    <property type="project" value="UniProtKB-UniRule"/>
</dbReference>
<dbReference type="GO" id="GO:0019899">
    <property type="term" value="F:enzyme binding"/>
    <property type="evidence" value="ECO:0007669"/>
    <property type="project" value="UniProtKB-UniRule"/>
</dbReference>
<dbReference type="GO" id="GO:1902369">
    <property type="term" value="P:negative regulation of RNA catabolic process"/>
    <property type="evidence" value="ECO:0007669"/>
    <property type="project" value="TreeGrafter"/>
</dbReference>
<dbReference type="CDD" id="cd16841">
    <property type="entry name" value="RraA_family"/>
    <property type="match status" value="1"/>
</dbReference>
<dbReference type="FunFam" id="3.50.30.40:FF:000001">
    <property type="entry name" value="Regulator of ribonuclease activity A"/>
    <property type="match status" value="1"/>
</dbReference>
<dbReference type="Gene3D" id="3.50.30.40">
    <property type="entry name" value="Ribonuclease E inhibitor RraA/RraA-like"/>
    <property type="match status" value="1"/>
</dbReference>
<dbReference type="HAMAP" id="MF_00471">
    <property type="entry name" value="RraA"/>
    <property type="match status" value="1"/>
</dbReference>
<dbReference type="InterPro" id="IPR010203">
    <property type="entry name" value="RraA"/>
</dbReference>
<dbReference type="InterPro" id="IPR005493">
    <property type="entry name" value="RraA/RraA-like"/>
</dbReference>
<dbReference type="InterPro" id="IPR036704">
    <property type="entry name" value="RraA/RraA-like_sf"/>
</dbReference>
<dbReference type="InterPro" id="IPR014339">
    <property type="entry name" value="RraA_gpbac"/>
</dbReference>
<dbReference type="NCBIfam" id="TIGR01935">
    <property type="entry name" value="NOT-MenG"/>
    <property type="match status" value="1"/>
</dbReference>
<dbReference type="NCBIfam" id="NF006875">
    <property type="entry name" value="PRK09372.1"/>
    <property type="match status" value="1"/>
</dbReference>
<dbReference type="NCBIfam" id="TIGR02998">
    <property type="entry name" value="RraA_entero"/>
    <property type="match status" value="1"/>
</dbReference>
<dbReference type="PANTHER" id="PTHR33254">
    <property type="entry name" value="4-HYDROXY-4-METHYL-2-OXOGLUTARATE ALDOLASE 3-RELATED"/>
    <property type="match status" value="1"/>
</dbReference>
<dbReference type="PANTHER" id="PTHR33254:SF29">
    <property type="entry name" value="REGULATOR OF RIBONUCLEASE ACTIVITY A"/>
    <property type="match status" value="1"/>
</dbReference>
<dbReference type="Pfam" id="PF03737">
    <property type="entry name" value="RraA-like"/>
    <property type="match status" value="1"/>
</dbReference>
<dbReference type="SUPFAM" id="SSF89562">
    <property type="entry name" value="RraA-like"/>
    <property type="match status" value="1"/>
</dbReference>
<gene>
    <name evidence="1" type="primary">rraA</name>
    <name type="synonym">menG</name>
    <name type="ordered locus">Z5476</name>
    <name type="ordered locus">ECs4856</name>
</gene>
<organism>
    <name type="scientific">Escherichia coli O157:H7</name>
    <dbReference type="NCBI Taxonomy" id="83334"/>
    <lineage>
        <taxon>Bacteria</taxon>
        <taxon>Pseudomonadati</taxon>
        <taxon>Pseudomonadota</taxon>
        <taxon>Gammaproteobacteria</taxon>
        <taxon>Enterobacterales</taxon>
        <taxon>Enterobacteriaceae</taxon>
        <taxon>Escherichia</taxon>
    </lineage>
</organism>
<sequence length="161" mass="17360">MKYDTSELCDIYQEDVNVVEPLFSNFGGRASFGGQIITVKCFEDNGLLYDLLEQNGRGRVLVVDGGGSVRRALVDAELARLAVQNEWEGLVIYGAVRQVDDLEELDIGIQAMAAIPVGAAGEGIGESDVRVNFGGVTFFSGDHLYADNTGIILSEDPLDIE</sequence>
<evidence type="ECO:0000255" key="1">
    <source>
        <dbReference type="HAMAP-Rule" id="MF_00471"/>
    </source>
</evidence>
<feature type="chain" id="PRO_0000209613" description="Regulator of ribonuclease activity A">
    <location>
        <begin position="1"/>
        <end position="161"/>
    </location>
</feature>
<accession>P0A8R2</accession>
<accession>P32165</accession>
<reference key="1">
    <citation type="journal article" date="2001" name="Nature">
        <title>Genome sequence of enterohaemorrhagic Escherichia coli O157:H7.</title>
        <authorList>
            <person name="Perna N.T."/>
            <person name="Plunkett G. III"/>
            <person name="Burland V."/>
            <person name="Mau B."/>
            <person name="Glasner J.D."/>
            <person name="Rose D.J."/>
            <person name="Mayhew G.F."/>
            <person name="Evans P.S."/>
            <person name="Gregor J."/>
            <person name="Kirkpatrick H.A."/>
            <person name="Posfai G."/>
            <person name="Hackett J."/>
            <person name="Klink S."/>
            <person name="Boutin A."/>
            <person name="Shao Y."/>
            <person name="Miller L."/>
            <person name="Grotbeck E.J."/>
            <person name="Davis N.W."/>
            <person name="Lim A."/>
            <person name="Dimalanta E.T."/>
            <person name="Potamousis K."/>
            <person name="Apodaca J."/>
            <person name="Anantharaman T.S."/>
            <person name="Lin J."/>
            <person name="Yen G."/>
            <person name="Schwartz D.C."/>
            <person name="Welch R.A."/>
            <person name="Blattner F.R."/>
        </authorList>
    </citation>
    <scope>NUCLEOTIDE SEQUENCE [LARGE SCALE GENOMIC DNA]</scope>
    <source>
        <strain>O157:H7 / EDL933 / ATCC 700927 / EHEC</strain>
    </source>
</reference>
<reference key="2">
    <citation type="journal article" date="2001" name="DNA Res.">
        <title>Complete genome sequence of enterohemorrhagic Escherichia coli O157:H7 and genomic comparison with a laboratory strain K-12.</title>
        <authorList>
            <person name="Hayashi T."/>
            <person name="Makino K."/>
            <person name="Ohnishi M."/>
            <person name="Kurokawa K."/>
            <person name="Ishii K."/>
            <person name="Yokoyama K."/>
            <person name="Han C.-G."/>
            <person name="Ohtsubo E."/>
            <person name="Nakayama K."/>
            <person name="Murata T."/>
            <person name="Tanaka M."/>
            <person name="Tobe T."/>
            <person name="Iida T."/>
            <person name="Takami H."/>
            <person name="Honda T."/>
            <person name="Sasakawa C."/>
            <person name="Ogasawara N."/>
            <person name="Yasunaga T."/>
            <person name="Kuhara S."/>
            <person name="Shiba T."/>
            <person name="Hattori M."/>
            <person name="Shinagawa H."/>
        </authorList>
    </citation>
    <scope>NUCLEOTIDE SEQUENCE [LARGE SCALE GENOMIC DNA]</scope>
    <source>
        <strain>O157:H7 / Sakai / RIMD 0509952 / EHEC</strain>
    </source>
</reference>
<name>RRAA_ECO57</name>